<protein>
    <recommendedName>
        <fullName evidence="1 6">Xylulose kinase</fullName>
        <shortName evidence="5">XK</shortName>
        <shortName evidence="1 4">Xylulokinase</shortName>
        <ecNumber evidence="1 3">2.7.1.17</ecNumber>
    </recommendedName>
    <alternativeName>
        <fullName evidence="4">1-deoxy-D-xylulokinase</fullName>
        <ecNumber evidence="2">2.7.1.-</ecNumber>
    </alternativeName>
</protein>
<proteinExistence type="evidence at protein level"/>
<comment type="function">
    <text evidence="2 3">Catalyzes the phosphorylation of D-xylulose to D-xylulose 5-phosphate (PubMed:17123542). Also catalyzes the phosphorylation of 1-deoxy-D-xylulose to 1-deoxy-D-xylulose 5-phosphate, with lower efficiency (PubMed:11168365). Can also use D-ribulose, xylitol and D-arabitol, but D-xylulose is preferred over the other substrates (PubMed:17123542). Has a weak substrate-independent Mg-ATP-hydrolyzing activity (PubMed:17123542).</text>
</comment>
<comment type="catalytic activity">
    <reaction evidence="1 3">
        <text>D-xylulose + ATP = D-xylulose 5-phosphate + ADP + H(+)</text>
        <dbReference type="Rhea" id="RHEA:10964"/>
        <dbReference type="ChEBI" id="CHEBI:15378"/>
        <dbReference type="ChEBI" id="CHEBI:17140"/>
        <dbReference type="ChEBI" id="CHEBI:30616"/>
        <dbReference type="ChEBI" id="CHEBI:57737"/>
        <dbReference type="ChEBI" id="CHEBI:456216"/>
        <dbReference type="EC" id="2.7.1.17"/>
    </reaction>
</comment>
<comment type="catalytic activity">
    <reaction evidence="2">
        <text>1-deoxy-D-xylulose + ATP = 1-deoxy-D-xylulose 5-phosphate + ADP + H(+)</text>
        <dbReference type="Rhea" id="RHEA:27990"/>
        <dbReference type="ChEBI" id="CHEBI:15378"/>
        <dbReference type="ChEBI" id="CHEBI:28354"/>
        <dbReference type="ChEBI" id="CHEBI:30616"/>
        <dbReference type="ChEBI" id="CHEBI:57792"/>
        <dbReference type="ChEBI" id="CHEBI:456216"/>
    </reaction>
</comment>
<comment type="activity regulation">
    <text evidence="3">Sugar binding is accompanied by a dramatic hinge-bending movement that enhances interactions with Mg-ATP.</text>
</comment>
<comment type="biophysicochemical properties">
    <kinetics>
        <KM evidence="3">0.29 mM for D-xylulose</KM>
        <KM evidence="3">14 mM for D-ribulose</KM>
        <KM evidence="3">127 mM for xylitol</KM>
        <KM evidence="3">141 mM for D-arabitol</KM>
        <text evidence="3">kcat is 255 sec(-1) with D-xylulose as substrate. kcat is 235 sec(-1) with D-ribulose as substrate. kcat is 237 sec(-1) with xylitol as substrate. kcat is 105 sec(-1) with D-arabitol as substrate.</text>
    </kinetics>
</comment>
<comment type="subunit">
    <text evidence="3">Homodimer.</text>
</comment>
<comment type="similarity">
    <text evidence="1 7">Belongs to the FGGY kinase family.</text>
</comment>
<sequence>MYIGIDLGTSGVKVILLNEQGEVVAAQTEKLTVSRPHPLWSEQDPEQWWQATDRAMKALGDQHSLQDVKALGIAGQMHGATLLDAQQRVLRPAILWNDGRCAQECTLLEARVPQSRVITGNLMMPGFTAPKLLWVQRHEPEIFRQIDKVLLPKDYLRLRMTGEFASDMSDAAGTMWLDVAKRDWSDVMLQACDLSRDQMPALYEGSEITGALLPEVAKAWGMATVPVVAGGGDNAAGAVGVGMVDANQAMLSLGTSGVYFAVSEGFLSKPESAVHSFCHALPQRWHLMSVMLSAASCLDWAAKLTGLSNVPALIAAAQQADESAEPVWFLPYLSGERTPHNNPQAKGVFFGLTHQHGPNELARAVLEGVGYALADGMDVVHACGIKPQSVTLIGGGARSEYWRQMLADISGQQLDYRTGGDVGPALGAARLAQIAANPEKSLIELLPQLPLEQSHLPDAQRYAAYQPRRETFRRLYQQLLPLMA</sequence>
<feature type="chain" id="PRO_0000059549" description="Xylulose kinase">
    <location>
        <begin position="1"/>
        <end position="484"/>
    </location>
</feature>
<feature type="active site" description="Proton acceptor" evidence="1 8">
    <location>
        <position position="233"/>
    </location>
</feature>
<feature type="binding site" evidence="1 3">
    <location>
        <begin position="77"/>
        <end position="78"/>
    </location>
    <ligand>
        <name>substrate</name>
    </ligand>
</feature>
<feature type="site" description="Important for activity" evidence="1 8">
    <location>
        <position position="6"/>
    </location>
</feature>
<feature type="mutagenesis site" description="Loss of activity." evidence="3">
    <original>D</original>
    <variation>A</variation>
    <location>
        <position position="6"/>
    </location>
</feature>
<feature type="mutagenesis site" description="Loss of activity." evidence="3">
    <original>D</original>
    <variation>A</variation>
    <location>
        <position position="233"/>
    </location>
</feature>
<feature type="strand" evidence="11">
    <location>
        <begin position="2"/>
        <end position="7"/>
    </location>
</feature>
<feature type="strand" evidence="11">
    <location>
        <begin position="9"/>
        <end position="17"/>
    </location>
</feature>
<feature type="strand" evidence="11">
    <location>
        <begin position="23"/>
        <end position="30"/>
    </location>
</feature>
<feature type="helix" evidence="11">
    <location>
        <begin position="45"/>
        <end position="62"/>
    </location>
</feature>
<feature type="strand" evidence="11">
    <location>
        <begin position="70"/>
        <end position="75"/>
    </location>
</feature>
<feature type="strand" evidence="11">
    <location>
        <begin position="80"/>
        <end position="83"/>
    </location>
</feature>
<feature type="helix" evidence="11">
    <location>
        <begin position="102"/>
        <end position="111"/>
    </location>
</feature>
<feature type="helix" evidence="11">
    <location>
        <begin position="115"/>
        <end position="119"/>
    </location>
</feature>
<feature type="helix" evidence="11">
    <location>
        <begin position="128"/>
        <end position="138"/>
    </location>
</feature>
<feature type="helix" evidence="11">
    <location>
        <begin position="140"/>
        <end position="143"/>
    </location>
</feature>
<feature type="strand" evidence="11">
    <location>
        <begin position="148"/>
        <end position="150"/>
    </location>
</feature>
<feature type="helix" evidence="11">
    <location>
        <begin position="152"/>
        <end position="161"/>
    </location>
</feature>
<feature type="strand" evidence="11">
    <location>
        <begin position="165"/>
        <end position="167"/>
    </location>
</feature>
<feature type="helix" evidence="11">
    <location>
        <begin position="168"/>
        <end position="172"/>
    </location>
</feature>
<feature type="turn" evidence="11">
    <location>
        <begin position="173"/>
        <end position="175"/>
    </location>
</feature>
<feature type="turn" evidence="11">
    <location>
        <begin position="179"/>
        <end position="182"/>
    </location>
</feature>
<feature type="helix" evidence="11">
    <location>
        <begin position="186"/>
        <end position="190"/>
    </location>
</feature>
<feature type="turn" evidence="11">
    <location>
        <begin position="191"/>
        <end position="193"/>
    </location>
</feature>
<feature type="helix" evidence="11">
    <location>
        <begin position="196"/>
        <end position="198"/>
    </location>
</feature>
<feature type="strand" evidence="11">
    <location>
        <begin position="201"/>
        <end position="203"/>
    </location>
</feature>
<feature type="strand" evidence="11">
    <location>
        <begin position="207"/>
        <end position="211"/>
    </location>
</feature>
<feature type="helix" evidence="11">
    <location>
        <begin position="214"/>
        <end position="219"/>
    </location>
</feature>
<feature type="strand" evidence="11">
    <location>
        <begin position="226"/>
        <end position="228"/>
    </location>
</feature>
<feature type="helix" evidence="11">
    <location>
        <begin position="233"/>
        <end position="241"/>
    </location>
</feature>
<feature type="strand" evidence="11">
    <location>
        <begin position="249"/>
        <end position="262"/>
    </location>
</feature>
<feature type="strand" evidence="11">
    <location>
        <begin position="271"/>
        <end position="273"/>
    </location>
</feature>
<feature type="strand" evidence="11">
    <location>
        <begin position="275"/>
        <end position="278"/>
    </location>
</feature>
<feature type="strand" evidence="11">
    <location>
        <begin position="285"/>
        <end position="291"/>
    </location>
</feature>
<feature type="helix" evidence="11">
    <location>
        <begin position="294"/>
        <end position="304"/>
    </location>
</feature>
<feature type="helix" evidence="11">
    <location>
        <begin position="310"/>
        <end position="316"/>
    </location>
</feature>
<feature type="helix" evidence="11">
    <location>
        <begin position="317"/>
        <end position="319"/>
    </location>
</feature>
<feature type="strand" evidence="11">
    <location>
        <begin position="328"/>
        <end position="333"/>
    </location>
</feature>
<feature type="strand" evidence="11">
    <location>
        <begin position="345"/>
        <end position="353"/>
    </location>
</feature>
<feature type="helix" evidence="11">
    <location>
        <begin position="358"/>
        <end position="381"/>
    </location>
</feature>
<feature type="turn" evidence="11">
    <location>
        <begin position="382"/>
        <end position="384"/>
    </location>
</feature>
<feature type="strand" evidence="11">
    <location>
        <begin position="390"/>
        <end position="394"/>
    </location>
</feature>
<feature type="helix" evidence="11">
    <location>
        <begin position="395"/>
        <end position="397"/>
    </location>
</feature>
<feature type="helix" evidence="11">
    <location>
        <begin position="400"/>
        <end position="410"/>
    </location>
</feature>
<feature type="strand" evidence="11">
    <location>
        <begin position="414"/>
        <end position="418"/>
    </location>
</feature>
<feature type="helix" evidence="11">
    <location>
        <begin position="424"/>
        <end position="436"/>
    </location>
</feature>
<feature type="helix" evidence="11">
    <location>
        <begin position="442"/>
        <end position="445"/>
    </location>
</feature>
<feature type="strand" evidence="11">
    <location>
        <begin position="451"/>
        <end position="455"/>
    </location>
</feature>
<feature type="helix" evidence="11">
    <location>
        <begin position="459"/>
        <end position="479"/>
    </location>
</feature>
<feature type="helix" evidence="11">
    <location>
        <begin position="480"/>
        <end position="483"/>
    </location>
</feature>
<accession>P09099</accession>
<accession>Q2M7M7</accession>
<gene>
    <name evidence="1" type="primary">xylB</name>
    <name type="ordered locus">b3564</name>
    <name type="ordered locus">JW3536</name>
</gene>
<name>XYLB_ECOLI</name>
<keyword id="KW-0002">3D-structure</keyword>
<keyword id="KW-0021">Allosteric enzyme</keyword>
<keyword id="KW-0067">ATP-binding</keyword>
<keyword id="KW-0119">Carbohydrate metabolism</keyword>
<keyword id="KW-0903">Direct protein sequencing</keyword>
<keyword id="KW-0418">Kinase</keyword>
<keyword id="KW-0547">Nucleotide-binding</keyword>
<keyword id="KW-1185">Reference proteome</keyword>
<keyword id="KW-0808">Transferase</keyword>
<keyword id="KW-0859">Xylose metabolism</keyword>
<organism>
    <name type="scientific">Escherichia coli (strain K12)</name>
    <dbReference type="NCBI Taxonomy" id="83333"/>
    <lineage>
        <taxon>Bacteria</taxon>
        <taxon>Pseudomonadati</taxon>
        <taxon>Pseudomonadota</taxon>
        <taxon>Gammaproteobacteria</taxon>
        <taxon>Enterobacterales</taxon>
        <taxon>Enterobacteriaceae</taxon>
        <taxon>Escherichia</taxon>
    </lineage>
</organism>
<dbReference type="EC" id="2.7.1.17" evidence="1 3"/>
<dbReference type="EC" id="2.7.1.-" evidence="2"/>
<dbReference type="EMBL" id="K01996">
    <property type="protein sequence ID" value="AAA24769.1"/>
    <property type="molecule type" value="Genomic_DNA"/>
</dbReference>
<dbReference type="EMBL" id="X04691">
    <property type="protein sequence ID" value="CAA28395.1"/>
    <property type="molecule type" value="Genomic_DNA"/>
</dbReference>
<dbReference type="EMBL" id="U00039">
    <property type="protein sequence ID" value="AAB18541.1"/>
    <property type="molecule type" value="Genomic_DNA"/>
</dbReference>
<dbReference type="EMBL" id="U00096">
    <property type="protein sequence ID" value="AAC76588.1"/>
    <property type="molecule type" value="Genomic_DNA"/>
</dbReference>
<dbReference type="EMBL" id="AP009048">
    <property type="protein sequence ID" value="BAE77729.1"/>
    <property type="molecule type" value="Genomic_DNA"/>
</dbReference>
<dbReference type="PIR" id="A30266">
    <property type="entry name" value="KIECXY"/>
</dbReference>
<dbReference type="RefSeq" id="NP_418021.1">
    <property type="nucleotide sequence ID" value="NC_000913.3"/>
</dbReference>
<dbReference type="RefSeq" id="WP_000275334.1">
    <property type="nucleotide sequence ID" value="NZ_SSZK01000041.1"/>
</dbReference>
<dbReference type="PDB" id="2ITM">
    <property type="method" value="X-ray"/>
    <property type="resolution" value="2.10 A"/>
    <property type="chains" value="A/B=1-484"/>
</dbReference>
<dbReference type="PDB" id="2NLX">
    <property type="method" value="X-ray"/>
    <property type="resolution" value="2.70 A"/>
    <property type="chains" value="A/B=1-484"/>
</dbReference>
<dbReference type="PDBsum" id="2ITM"/>
<dbReference type="PDBsum" id="2NLX"/>
<dbReference type="SMR" id="P09099"/>
<dbReference type="BioGRID" id="4262539">
    <property type="interactions" value="12"/>
</dbReference>
<dbReference type="FunCoup" id="P09099">
    <property type="interactions" value="173"/>
</dbReference>
<dbReference type="IntAct" id="P09099">
    <property type="interactions" value="1"/>
</dbReference>
<dbReference type="STRING" id="511145.b3564"/>
<dbReference type="jPOST" id="P09099"/>
<dbReference type="PaxDb" id="511145-b3564"/>
<dbReference type="EnsemblBacteria" id="AAC76588">
    <property type="protein sequence ID" value="AAC76588"/>
    <property type="gene ID" value="b3564"/>
</dbReference>
<dbReference type="GeneID" id="948133"/>
<dbReference type="KEGG" id="ecj:JW3536"/>
<dbReference type="KEGG" id="eco:b3564"/>
<dbReference type="KEGG" id="ecoc:C3026_19325"/>
<dbReference type="PATRIC" id="fig|1411691.4.peg.3148"/>
<dbReference type="EchoBASE" id="EB1068"/>
<dbReference type="eggNOG" id="COG1070">
    <property type="taxonomic scope" value="Bacteria"/>
</dbReference>
<dbReference type="HOGENOM" id="CLU_009281_3_0_6"/>
<dbReference type="InParanoid" id="P09099"/>
<dbReference type="OMA" id="RVHTFCH"/>
<dbReference type="OrthoDB" id="9805576at2"/>
<dbReference type="PhylomeDB" id="P09099"/>
<dbReference type="BioCyc" id="EcoCyc:XYLULOKIN-MONOMER"/>
<dbReference type="BioCyc" id="MetaCyc:XYLULOKIN-MONOMER"/>
<dbReference type="BRENDA" id="2.7.1.17">
    <property type="organism ID" value="2026"/>
</dbReference>
<dbReference type="EvolutionaryTrace" id="P09099"/>
<dbReference type="PRO" id="PR:P09099"/>
<dbReference type="Proteomes" id="UP000000625">
    <property type="component" value="Chromosome"/>
</dbReference>
<dbReference type="GO" id="GO:0103020">
    <property type="term" value="F:1-deoxy-D-xylulose kinase activity"/>
    <property type="evidence" value="ECO:0007669"/>
    <property type="project" value="RHEA"/>
</dbReference>
<dbReference type="GO" id="GO:0005524">
    <property type="term" value="F:ATP binding"/>
    <property type="evidence" value="ECO:0007669"/>
    <property type="project" value="UniProtKB-UniRule"/>
</dbReference>
<dbReference type="GO" id="GO:0004856">
    <property type="term" value="F:D-xylulokinase activity"/>
    <property type="evidence" value="ECO:0000314"/>
    <property type="project" value="EcoCyc"/>
</dbReference>
<dbReference type="GO" id="GO:0042803">
    <property type="term" value="F:protein homodimerization activity"/>
    <property type="evidence" value="ECO:0000314"/>
    <property type="project" value="EcoCyc"/>
</dbReference>
<dbReference type="GO" id="GO:0042843">
    <property type="term" value="P:D-xylose catabolic process"/>
    <property type="evidence" value="ECO:0000315"/>
    <property type="project" value="EcoCyc"/>
</dbReference>
<dbReference type="GO" id="GO:0005998">
    <property type="term" value="P:xylulose catabolic process"/>
    <property type="evidence" value="ECO:0000315"/>
    <property type="project" value="EcoCyc"/>
</dbReference>
<dbReference type="CDD" id="cd07808">
    <property type="entry name" value="ASKHA_NBD_FGGY_EcXK-like"/>
    <property type="match status" value="1"/>
</dbReference>
<dbReference type="FunFam" id="3.30.420.40:FF:000168">
    <property type="entry name" value="Xylulose kinase"/>
    <property type="match status" value="1"/>
</dbReference>
<dbReference type="FunFam" id="3.30.420.40:FF:000173">
    <property type="entry name" value="Xylulose kinase"/>
    <property type="match status" value="1"/>
</dbReference>
<dbReference type="Gene3D" id="3.30.420.40">
    <property type="match status" value="2"/>
</dbReference>
<dbReference type="HAMAP" id="MF_02220">
    <property type="entry name" value="XylB"/>
    <property type="match status" value="1"/>
</dbReference>
<dbReference type="InterPro" id="IPR043129">
    <property type="entry name" value="ATPase_NBD"/>
</dbReference>
<dbReference type="InterPro" id="IPR000577">
    <property type="entry name" value="Carb_kinase_FGGY"/>
</dbReference>
<dbReference type="InterPro" id="IPR018483">
    <property type="entry name" value="Carb_kinase_FGGY_CS"/>
</dbReference>
<dbReference type="InterPro" id="IPR018485">
    <property type="entry name" value="FGGY_C"/>
</dbReference>
<dbReference type="InterPro" id="IPR050406">
    <property type="entry name" value="FGGY_Carb_Kinase"/>
</dbReference>
<dbReference type="InterPro" id="IPR018484">
    <property type="entry name" value="FGGY_N"/>
</dbReference>
<dbReference type="InterPro" id="IPR006000">
    <property type="entry name" value="Xylulokinase"/>
</dbReference>
<dbReference type="NCBIfam" id="NF011601">
    <property type="entry name" value="PRK15027.1"/>
    <property type="match status" value="1"/>
</dbReference>
<dbReference type="NCBIfam" id="TIGR01312">
    <property type="entry name" value="XylB"/>
    <property type="match status" value="1"/>
</dbReference>
<dbReference type="PANTHER" id="PTHR43095">
    <property type="entry name" value="SUGAR KINASE"/>
    <property type="match status" value="1"/>
</dbReference>
<dbReference type="PANTHER" id="PTHR43095:SF6">
    <property type="entry name" value="XYLULOSE KINASE"/>
    <property type="match status" value="1"/>
</dbReference>
<dbReference type="Pfam" id="PF02782">
    <property type="entry name" value="FGGY_C"/>
    <property type="match status" value="1"/>
</dbReference>
<dbReference type="Pfam" id="PF00370">
    <property type="entry name" value="FGGY_N"/>
    <property type="match status" value="1"/>
</dbReference>
<dbReference type="PIRSF" id="PIRSF000538">
    <property type="entry name" value="GlpK"/>
    <property type="match status" value="1"/>
</dbReference>
<dbReference type="SUPFAM" id="SSF53067">
    <property type="entry name" value="Actin-like ATPase domain"/>
    <property type="match status" value="2"/>
</dbReference>
<dbReference type="PROSITE" id="PS00933">
    <property type="entry name" value="FGGY_KINASES_1"/>
    <property type="match status" value="1"/>
</dbReference>
<dbReference type="PROSITE" id="PS00445">
    <property type="entry name" value="FGGY_KINASES_2"/>
    <property type="match status" value="1"/>
</dbReference>
<reference key="1">
    <citation type="journal article" date="1984" name="Appl. Environ. Microbiol.">
        <title>Cloning and sequencing of the xylose isomerase and xylulose kinase genes of Escherichia coli.</title>
        <authorList>
            <person name="Lawlis V.B."/>
            <person name="Dennis M.S."/>
            <person name="Chen E.Y."/>
            <person name="Smith D.H."/>
            <person name="Henner D.J."/>
        </authorList>
    </citation>
    <scope>NUCLEOTIDE SEQUENCE [GENOMIC DNA]</scope>
    <source>
        <strain>K12 / MM294 / ATCC 33625 / DSM 5208</strain>
    </source>
</reference>
<reference key="2">
    <citation type="journal article" date="1994" name="Nucleic Acids Res.">
        <title>Analysis of the Escherichia coli genome. V. DNA sequence of the region from 76.0 to 81.5 minutes.</title>
        <authorList>
            <person name="Sofia H.J."/>
            <person name="Burland V."/>
            <person name="Daniels D.L."/>
            <person name="Plunkett G. III"/>
            <person name="Blattner F.R."/>
        </authorList>
    </citation>
    <scope>NUCLEOTIDE SEQUENCE [LARGE SCALE GENOMIC DNA]</scope>
    <source>
        <strain>K12 / MG1655 / ATCC 47076</strain>
    </source>
</reference>
<reference key="3">
    <citation type="journal article" date="1997" name="Science">
        <title>The complete genome sequence of Escherichia coli K-12.</title>
        <authorList>
            <person name="Blattner F.R."/>
            <person name="Plunkett G. III"/>
            <person name="Bloch C.A."/>
            <person name="Perna N.T."/>
            <person name="Burland V."/>
            <person name="Riley M."/>
            <person name="Collado-Vides J."/>
            <person name="Glasner J.D."/>
            <person name="Rode C.K."/>
            <person name="Mayhew G.F."/>
            <person name="Gregor J."/>
            <person name="Davis N.W."/>
            <person name="Kirkpatrick H.A."/>
            <person name="Goeden M.A."/>
            <person name="Rose D.J."/>
            <person name="Mau B."/>
            <person name="Shao Y."/>
        </authorList>
    </citation>
    <scope>NUCLEOTIDE SEQUENCE [LARGE SCALE GENOMIC DNA]</scope>
    <source>
        <strain>K12 / MG1655 / ATCC 47076</strain>
    </source>
</reference>
<reference key="4">
    <citation type="journal article" date="2006" name="Mol. Syst. Biol.">
        <title>Highly accurate genome sequences of Escherichia coli K-12 strains MG1655 and W3110.</title>
        <authorList>
            <person name="Hayashi K."/>
            <person name="Morooka N."/>
            <person name="Yamamoto Y."/>
            <person name="Fujita K."/>
            <person name="Isono K."/>
            <person name="Choi S."/>
            <person name="Ohtsubo E."/>
            <person name="Baba T."/>
            <person name="Wanner B.L."/>
            <person name="Mori H."/>
            <person name="Horiuchi T."/>
        </authorList>
    </citation>
    <scope>NUCLEOTIDE SEQUENCE [LARGE SCALE GENOMIC DNA]</scope>
    <source>
        <strain>K12 / W3110 / ATCC 27325 / DSM 5911</strain>
    </source>
</reference>
<reference key="5">
    <citation type="journal article" date="1997" name="Electrophoresis">
        <title>Escherichia coli proteome analysis using the gene-protein database.</title>
        <authorList>
            <person name="VanBogelen R.A."/>
            <person name="Abshire K.Z."/>
            <person name="Moldover B."/>
            <person name="Olson E.R."/>
            <person name="Neidhardt F.C."/>
        </authorList>
    </citation>
    <scope>IDENTIFICATION BY 2D-GEL</scope>
</reference>
<reference key="6">
    <citation type="journal article" date="2001" name="Eur. J. Biochem.">
        <title>Phosphorylation of 1-deoxy-D-xylulose by D-xylulokinase of Escherichia coli.</title>
        <authorList>
            <person name="Wungsintaweekul J."/>
            <person name="Herz S."/>
            <person name="Hecht S."/>
            <person name="Eisenreich W."/>
            <person name="Feicht R."/>
            <person name="Rohdich F."/>
            <person name="Bacher A."/>
            <person name="Zenk M.H."/>
        </authorList>
    </citation>
    <scope>PROTEIN SEQUENCE OF 1-21</scope>
    <scope>FUNCTION</scope>
    <scope>CATALYTIC ACTIVITY</scope>
</reference>
<reference evidence="9 10" key="7">
    <citation type="journal article" date="2007" name="J. Mol. Biol.">
        <title>Structural and kinetic studies of induced fit in xylulose kinase from Escherichia coli.</title>
        <authorList>
            <person name="Di Luccio E."/>
            <person name="Petschacher B."/>
            <person name="Voegtli J."/>
            <person name="Chou H.T."/>
            <person name="Stahlberg H."/>
            <person name="Nidetzky B."/>
            <person name="Wilson D.K."/>
        </authorList>
    </citation>
    <scope>X-RAY CRYSTALLOGRAPHY (2.10 ANGSTROMS) OF APOENZYME AND IN COMPLEX WITH D-XYLULOSE</scope>
    <scope>FUNCTION</scope>
    <scope>CATALYTIC ACTIVITY</scope>
    <scope>ACTIVITY REGULATION</scope>
    <scope>BIOPHYSICOCHEMICAL PROPERTIES</scope>
    <scope>SUBUNIT</scope>
    <scope>ACTIVE SITE</scope>
    <scope>MUTAGENESIS OF ASP-6 AND ASP-233</scope>
</reference>
<evidence type="ECO:0000255" key="1">
    <source>
        <dbReference type="HAMAP-Rule" id="MF_02220"/>
    </source>
</evidence>
<evidence type="ECO:0000269" key="2">
    <source>
    </source>
</evidence>
<evidence type="ECO:0000269" key="3">
    <source>
    </source>
</evidence>
<evidence type="ECO:0000303" key="4">
    <source>
    </source>
</evidence>
<evidence type="ECO:0000303" key="5">
    <source>
    </source>
</evidence>
<evidence type="ECO:0000303" key="6">
    <source>
    </source>
</evidence>
<evidence type="ECO:0000305" key="7"/>
<evidence type="ECO:0000305" key="8">
    <source>
    </source>
</evidence>
<evidence type="ECO:0007744" key="9">
    <source>
        <dbReference type="PDB" id="2ITM"/>
    </source>
</evidence>
<evidence type="ECO:0007744" key="10">
    <source>
        <dbReference type="PDB" id="2NLX"/>
    </source>
</evidence>
<evidence type="ECO:0007829" key="11">
    <source>
        <dbReference type="PDB" id="2ITM"/>
    </source>
</evidence>